<dbReference type="EC" id="2.5.1.-" evidence="1"/>
<dbReference type="EC" id="2.5.1.39" evidence="1"/>
<dbReference type="EMBL" id="AJ720006">
    <property type="protein sequence ID" value="CAG31665.1"/>
    <property type="molecule type" value="mRNA"/>
</dbReference>
<dbReference type="RefSeq" id="NP_001026050.1">
    <property type="nucleotide sequence ID" value="NM_001030879.1"/>
</dbReference>
<dbReference type="SMR" id="Q5ZKS8"/>
<dbReference type="FunCoup" id="Q5ZKS8">
    <property type="interactions" value="813"/>
</dbReference>
<dbReference type="STRING" id="9031.ENSGALP00000005301"/>
<dbReference type="PaxDb" id="9031-ENSGALP00000005301"/>
<dbReference type="GeneID" id="419456"/>
<dbReference type="KEGG" id="gga:419456"/>
<dbReference type="CTD" id="29914"/>
<dbReference type="VEuPathDB" id="HostDB:geneid_419456"/>
<dbReference type="eggNOG" id="KOG4581">
    <property type="taxonomic scope" value="Eukaryota"/>
</dbReference>
<dbReference type="InParanoid" id="Q5ZKS8"/>
<dbReference type="OrthoDB" id="203513at2759"/>
<dbReference type="PhylomeDB" id="Q5ZKS8"/>
<dbReference type="UniPathway" id="UPA00079"/>
<dbReference type="UniPathway" id="UPA00232"/>
<dbReference type="PRO" id="PR:Q5ZKS8"/>
<dbReference type="Proteomes" id="UP000000539">
    <property type="component" value="Unassembled WGS sequence"/>
</dbReference>
<dbReference type="GO" id="GO:0005783">
    <property type="term" value="C:endoplasmic reticulum"/>
    <property type="evidence" value="ECO:0000250"/>
    <property type="project" value="UniProtKB"/>
</dbReference>
<dbReference type="GO" id="GO:0005789">
    <property type="term" value="C:endoplasmic reticulum membrane"/>
    <property type="evidence" value="ECO:0007669"/>
    <property type="project" value="UniProtKB-SubCell"/>
</dbReference>
<dbReference type="GO" id="GO:0000139">
    <property type="term" value="C:Golgi membrane"/>
    <property type="evidence" value="ECO:0000250"/>
    <property type="project" value="UniProtKB"/>
</dbReference>
<dbReference type="GO" id="GO:0031966">
    <property type="term" value="C:mitochondrial membrane"/>
    <property type="evidence" value="ECO:0007669"/>
    <property type="project" value="UniProtKB-SubCell"/>
</dbReference>
<dbReference type="GO" id="GO:0016209">
    <property type="term" value="F:antioxidant activity"/>
    <property type="evidence" value="ECO:0000250"/>
    <property type="project" value="UniProtKB"/>
</dbReference>
<dbReference type="GO" id="GO:0004659">
    <property type="term" value="F:prenyltransferase activity"/>
    <property type="evidence" value="ECO:0000250"/>
    <property type="project" value="UniProtKB"/>
</dbReference>
<dbReference type="GO" id="GO:0072359">
    <property type="term" value="P:circulatory system development"/>
    <property type="evidence" value="ECO:0000250"/>
    <property type="project" value="UniProtKB"/>
</dbReference>
<dbReference type="GO" id="GO:0001885">
    <property type="term" value="P:endothelial cell development"/>
    <property type="evidence" value="ECO:0000250"/>
    <property type="project" value="UniProtKB"/>
</dbReference>
<dbReference type="GO" id="GO:0009234">
    <property type="term" value="P:menaquinone biosynthetic process"/>
    <property type="evidence" value="ECO:0000250"/>
    <property type="project" value="UniProtKB"/>
</dbReference>
<dbReference type="GO" id="GO:0006744">
    <property type="term" value="P:ubiquinone biosynthetic process"/>
    <property type="evidence" value="ECO:0000250"/>
    <property type="project" value="UniProtKB"/>
</dbReference>
<dbReference type="GO" id="GO:0042371">
    <property type="term" value="P:vitamin K biosynthetic process"/>
    <property type="evidence" value="ECO:0000250"/>
    <property type="project" value="UniProtKB"/>
</dbReference>
<dbReference type="CDD" id="cd13962">
    <property type="entry name" value="PT_UbiA_UBIAD1"/>
    <property type="match status" value="1"/>
</dbReference>
<dbReference type="FunFam" id="1.10.357.140:FF:000005">
    <property type="entry name" value="UbiA prenyltransferase domain-containing protein 1"/>
    <property type="match status" value="1"/>
</dbReference>
<dbReference type="Gene3D" id="1.10.357.140">
    <property type="entry name" value="UbiA prenyltransferase"/>
    <property type="match status" value="1"/>
</dbReference>
<dbReference type="InterPro" id="IPR000537">
    <property type="entry name" value="UbiA_prenyltransferase"/>
</dbReference>
<dbReference type="InterPro" id="IPR044878">
    <property type="entry name" value="UbiA_sf"/>
</dbReference>
<dbReference type="InterPro" id="IPR026046">
    <property type="entry name" value="UBIAD1"/>
</dbReference>
<dbReference type="PANTHER" id="PTHR13929">
    <property type="entry name" value="1,4-DIHYDROXY-2-NAPHTHOATE OCTAPRENYLTRANSFERASE"/>
    <property type="match status" value="1"/>
</dbReference>
<dbReference type="PANTHER" id="PTHR13929:SF0">
    <property type="entry name" value="UBIA PRENYLTRANSFERASE DOMAIN-CONTAINING PROTEIN 1"/>
    <property type="match status" value="1"/>
</dbReference>
<dbReference type="Pfam" id="PF01040">
    <property type="entry name" value="UbiA"/>
    <property type="match status" value="1"/>
</dbReference>
<dbReference type="PIRSF" id="PIRSF005355">
    <property type="entry name" value="UBIAD1"/>
    <property type="match status" value="1"/>
</dbReference>
<accession>Q5ZKS8</accession>
<feature type="chain" id="PRO_0000242629" description="UbiA prenyltransferase domain-containing protein 1">
    <location>
        <begin position="1"/>
        <end position="333"/>
    </location>
</feature>
<feature type="transmembrane region" description="Helical" evidence="2">
    <location>
        <begin position="78"/>
        <end position="98"/>
    </location>
</feature>
<feature type="transmembrane region" description="Helical" evidence="2">
    <location>
        <begin position="129"/>
        <end position="149"/>
    </location>
</feature>
<feature type="transmembrane region" description="Helical" evidence="2">
    <location>
        <begin position="155"/>
        <end position="175"/>
    </location>
</feature>
<feature type="transmembrane region" description="Helical" evidence="2">
    <location>
        <begin position="177"/>
        <end position="197"/>
    </location>
</feature>
<feature type="transmembrane region" description="Helical" evidence="2">
    <location>
        <begin position="199"/>
        <end position="219"/>
    </location>
</feature>
<feature type="transmembrane region" description="Helical" evidence="2">
    <location>
        <begin position="240"/>
        <end position="260"/>
    </location>
</feature>
<feature type="transmembrane region" description="Helical" evidence="2">
    <location>
        <begin position="265"/>
        <end position="285"/>
    </location>
</feature>
<feature type="transmembrane region" description="Helical" evidence="2">
    <location>
        <begin position="310"/>
        <end position="330"/>
    </location>
</feature>
<feature type="region of interest" description="Disordered" evidence="3">
    <location>
        <begin position="13"/>
        <end position="33"/>
    </location>
</feature>
<organism>
    <name type="scientific">Gallus gallus</name>
    <name type="common">Chicken</name>
    <dbReference type="NCBI Taxonomy" id="9031"/>
    <lineage>
        <taxon>Eukaryota</taxon>
        <taxon>Metazoa</taxon>
        <taxon>Chordata</taxon>
        <taxon>Craniata</taxon>
        <taxon>Vertebrata</taxon>
        <taxon>Euteleostomi</taxon>
        <taxon>Archelosauria</taxon>
        <taxon>Archosauria</taxon>
        <taxon>Dinosauria</taxon>
        <taxon>Saurischia</taxon>
        <taxon>Theropoda</taxon>
        <taxon>Coelurosauria</taxon>
        <taxon>Aves</taxon>
        <taxon>Neognathae</taxon>
        <taxon>Galloanserae</taxon>
        <taxon>Galliformes</taxon>
        <taxon>Phasianidae</taxon>
        <taxon>Phasianinae</taxon>
        <taxon>Gallus</taxon>
    </lineage>
</organism>
<evidence type="ECO:0000250" key="1">
    <source>
        <dbReference type="UniProtKB" id="Q9Y5Z9"/>
    </source>
</evidence>
<evidence type="ECO:0000255" key="2"/>
<evidence type="ECO:0000256" key="3">
    <source>
        <dbReference type="SAM" id="MobiDB-lite"/>
    </source>
</evidence>
<evidence type="ECO:0000305" key="4"/>
<gene>
    <name type="primary">UBIAD1</name>
    <name type="ORF">RCJMB04_9f15</name>
</gene>
<reference key="1">
    <citation type="journal article" date="2005" name="Genome Biol.">
        <title>Full-length cDNAs from chicken bursal lymphocytes to facilitate gene function analysis.</title>
        <authorList>
            <person name="Caldwell R.B."/>
            <person name="Kierzek A.M."/>
            <person name="Arakawa H."/>
            <person name="Bezzubov Y."/>
            <person name="Zaim J."/>
            <person name="Fiedler P."/>
            <person name="Kutter S."/>
            <person name="Blagodatski A."/>
            <person name="Kostovska D."/>
            <person name="Koter M."/>
            <person name="Plachy J."/>
            <person name="Carninci P."/>
            <person name="Hayashizaki Y."/>
            <person name="Buerstedde J.-M."/>
        </authorList>
    </citation>
    <scope>NUCLEOTIDE SEQUENCE [LARGE SCALE MRNA]</scope>
    <source>
        <strain>CB</strain>
        <tissue>Bursa of Fabricius</tissue>
    </source>
</reference>
<proteinExistence type="evidence at transcript level"/>
<keyword id="KW-0256">Endoplasmic reticulum</keyword>
<keyword id="KW-0333">Golgi apparatus</keyword>
<keyword id="KW-0472">Membrane</keyword>
<keyword id="KW-0474">Menaquinone biosynthesis</keyword>
<keyword id="KW-0496">Mitochondrion</keyword>
<keyword id="KW-0637">Prenyltransferase</keyword>
<keyword id="KW-1185">Reference proteome</keyword>
<keyword id="KW-0808">Transferase</keyword>
<keyword id="KW-0812">Transmembrane</keyword>
<keyword id="KW-1133">Transmembrane helix</keyword>
<keyword id="KW-0831">Ubiquinone biosynthesis</keyword>
<protein>
    <recommendedName>
        <fullName>UbiA prenyltransferase domain-containing protein 1</fullName>
        <ecNumber evidence="1">2.5.1.-</ecNumber>
        <ecNumber evidence="1">2.5.1.39</ecNumber>
    </recommendedName>
</protein>
<comment type="function">
    <text evidence="1">Prenyltransferase that mediates the formation of menaquinone-4 (MK-4) and coenzyme Q10. MK-4 is a vitamin K2 isoform required for endothelial cell development. Mediates the conversion of phylloquinone (PK) into MK-4, probably by cleaving the side chain of phylloquinone (PK) to release 2-methyl-1,4-naphthoquinone (menadione; K3) and then prenylating it with geranylgeranyl pyrophosphate (GGPP) to form MK-4. Also plays a role in cardiovascular development independently of MK-4 biosynthesis, by acting as a coenzyme Q10 biosynthetic enzyme: coenzyme Q10, also named ubiquinone, plays an important antioxidant role in the cardiovascular system. Mediates biosynthesis of coenzyme Q10 in the Golgi membrane, leading to protect cardiovascular tissues from NOS3/eNOS-dependent oxidative stress.</text>
</comment>
<comment type="catalytic activity">
    <reaction evidence="1">
        <text>menadiol + (2E,6E,10E)-geranylgeranyl diphosphate = menaquinol-4 + diphosphate</text>
        <dbReference type="Rhea" id="RHEA:74083"/>
        <dbReference type="ChEBI" id="CHEBI:6746"/>
        <dbReference type="ChEBI" id="CHEBI:33019"/>
        <dbReference type="ChEBI" id="CHEBI:58756"/>
        <dbReference type="ChEBI" id="CHEBI:193091"/>
    </reaction>
    <physiologicalReaction direction="left-to-right" evidence="1">
        <dbReference type="Rhea" id="RHEA:74084"/>
    </physiologicalReaction>
</comment>
<comment type="catalytic activity">
    <reaction evidence="1">
        <text>all-trans-decaprenyl diphosphate + 4-hydroxybenzoate = 4-hydroxy-3-(all-trans-decaprenyl)benzoate + diphosphate</text>
        <dbReference type="Rhea" id="RHEA:44564"/>
        <dbReference type="ChEBI" id="CHEBI:17879"/>
        <dbReference type="ChEBI" id="CHEBI:33019"/>
        <dbReference type="ChEBI" id="CHEBI:60721"/>
        <dbReference type="ChEBI" id="CHEBI:84503"/>
        <dbReference type="EC" id="2.5.1.39"/>
    </reaction>
    <physiologicalReaction direction="left-to-right" evidence="1">
        <dbReference type="Rhea" id="RHEA:44565"/>
    </physiologicalReaction>
</comment>
<comment type="pathway">
    <text evidence="1">Quinol/quinone metabolism; menaquinone biosynthesis.</text>
</comment>
<comment type="pathway">
    <text evidence="1">Cofactor biosynthesis; ubiquinone biosynthesis.</text>
</comment>
<comment type="subcellular location">
    <subcellularLocation>
        <location evidence="1">Endoplasmic reticulum membrane</location>
        <topology evidence="2">Multi-pass membrane protein</topology>
    </subcellularLocation>
    <subcellularLocation>
        <location evidence="1">Golgi apparatus membrane</location>
        <topology evidence="2">Multi-pass membrane protein</topology>
    </subcellularLocation>
    <subcellularLocation>
        <location evidence="1">Mitochondrion membrane</location>
        <topology evidence="2">Multi-pass membrane protein</topology>
    </subcellularLocation>
</comment>
<comment type="similarity">
    <text evidence="4">Belongs to the UbiA prenyltransferase family.</text>
</comment>
<name>UBIA1_CHICK</name>
<sequence length="333" mass="35750">MGPAELVQKISINAESPRGGERNDCGAGAERGPAGGWRQKCAAYVLALRPWSFSASLTPVALGSALAYRAEGALDPRLLVGSAVAVLAVHGAGNLVNTYYDFSKGIDHKKSDDRTLVDQILEPQDVVRFGVFLYTVGCICAAGLYAVSTLKLEHLALVYFGGLSSSFLYTGGIGFKYVALGDVVILITFGPLAVMFAHAVQVGYLSVSPLLYAVPLALSTEAILHSNNTRDMESDQQAGIVTLAIIIGPAFSYVLYTVLLFLPYLIFCVLATRYTISMALPLLTIPMAFSLERQFRSQNFNKIPQRTAKLNLLLGLFYVFGIMLAPAGALPKL</sequence>